<feature type="chain" id="PRO_0000431707" description="Myosin-binding protein 1">
    <location>
        <begin position="1"/>
        <end position="1113"/>
    </location>
</feature>
<feature type="transmembrane region" description="Helical" evidence="1">
    <location>
        <begin position="12"/>
        <end position="34"/>
    </location>
</feature>
<feature type="domain" description="GTD-binding" evidence="2">
    <location>
        <begin position="888"/>
        <end position="986"/>
    </location>
</feature>
<feature type="region of interest" description="Disordered" evidence="3">
    <location>
        <begin position="209"/>
        <end position="229"/>
    </location>
</feature>
<feature type="sequence conflict" description="In Ref. 3; BAC42783." evidence="6" ref="3">
    <original>C</original>
    <variation>R</variation>
    <location>
        <position position="721"/>
    </location>
</feature>
<dbReference type="EMBL" id="AC003981">
    <property type="protein sequence ID" value="AAF99773.1"/>
    <property type="status" value="ALT_SEQ"/>
    <property type="molecule type" value="Genomic_DNA"/>
</dbReference>
<dbReference type="EMBL" id="CP002684">
    <property type="protein sequence ID" value="AEE28348.1"/>
    <property type="molecule type" value="Genomic_DNA"/>
</dbReference>
<dbReference type="EMBL" id="CP002684">
    <property type="protein sequence ID" value="AEE28349.1"/>
    <property type="molecule type" value="Genomic_DNA"/>
</dbReference>
<dbReference type="EMBL" id="CP002684">
    <property type="protein sequence ID" value="ANM59414.1"/>
    <property type="molecule type" value="Genomic_DNA"/>
</dbReference>
<dbReference type="EMBL" id="CP002684">
    <property type="protein sequence ID" value="ANM59415.1"/>
    <property type="molecule type" value="Genomic_DNA"/>
</dbReference>
<dbReference type="EMBL" id="AK118159">
    <property type="protein sequence ID" value="BAC42783.1"/>
    <property type="molecule type" value="mRNA"/>
</dbReference>
<dbReference type="PIR" id="A86220">
    <property type="entry name" value="A86220"/>
</dbReference>
<dbReference type="PIR" id="T00736">
    <property type="entry name" value="T00736"/>
</dbReference>
<dbReference type="RefSeq" id="NP_001117250.1">
    <property type="nucleotide sequence ID" value="NM_001123778.2"/>
</dbReference>
<dbReference type="RefSeq" id="NP_001318957.1">
    <property type="nucleotide sequence ID" value="NM_001331788.1"/>
</dbReference>
<dbReference type="RefSeq" id="NP_001321772.1">
    <property type="nucleotide sequence ID" value="NM_001331789.1"/>
</dbReference>
<dbReference type="RefSeq" id="NP_172357.2">
    <property type="nucleotide sequence ID" value="NM_100754.3"/>
</dbReference>
<dbReference type="SMR" id="F4HXQ7"/>
<dbReference type="FunCoup" id="F4HXQ7">
    <property type="interactions" value="333"/>
</dbReference>
<dbReference type="STRING" id="3702.F4HXQ7"/>
<dbReference type="iPTMnet" id="F4HXQ7"/>
<dbReference type="PaxDb" id="3702-AT1G08800.2"/>
<dbReference type="ProteomicsDB" id="251356"/>
<dbReference type="EnsemblPlants" id="AT1G08800.1">
    <property type="protein sequence ID" value="AT1G08800.1"/>
    <property type="gene ID" value="AT1G08800"/>
</dbReference>
<dbReference type="EnsemblPlants" id="AT1G08800.2">
    <property type="protein sequence ID" value="AT1G08800.2"/>
    <property type="gene ID" value="AT1G08800"/>
</dbReference>
<dbReference type="EnsemblPlants" id="AT1G08800.3">
    <property type="protein sequence ID" value="AT1G08800.3"/>
    <property type="gene ID" value="AT1G08800"/>
</dbReference>
<dbReference type="EnsemblPlants" id="AT1G08800.4">
    <property type="protein sequence ID" value="AT1G08800.4"/>
    <property type="gene ID" value="AT1G08800"/>
</dbReference>
<dbReference type="GeneID" id="837402"/>
<dbReference type="Gramene" id="AT1G08800.1">
    <property type="protein sequence ID" value="AT1G08800.1"/>
    <property type="gene ID" value="AT1G08800"/>
</dbReference>
<dbReference type="Gramene" id="AT1G08800.2">
    <property type="protein sequence ID" value="AT1G08800.2"/>
    <property type="gene ID" value="AT1G08800"/>
</dbReference>
<dbReference type="Gramene" id="AT1G08800.3">
    <property type="protein sequence ID" value="AT1G08800.3"/>
    <property type="gene ID" value="AT1G08800"/>
</dbReference>
<dbReference type="Gramene" id="AT1G08800.4">
    <property type="protein sequence ID" value="AT1G08800.4"/>
    <property type="gene ID" value="AT1G08800"/>
</dbReference>
<dbReference type="KEGG" id="ath:AT1G08800"/>
<dbReference type="Araport" id="AT1G08800"/>
<dbReference type="TAIR" id="AT1G08800">
    <property type="gene designation" value="MYOB1"/>
</dbReference>
<dbReference type="eggNOG" id="ENOG502QPSJ">
    <property type="taxonomic scope" value="Eukaryota"/>
</dbReference>
<dbReference type="HOGENOM" id="CLU_009392_2_0_1"/>
<dbReference type="InParanoid" id="F4HXQ7"/>
<dbReference type="OMA" id="SMCERCS"/>
<dbReference type="PRO" id="PR:F4HXQ7"/>
<dbReference type="Proteomes" id="UP000006548">
    <property type="component" value="Chromosome 1"/>
</dbReference>
<dbReference type="ExpressionAtlas" id="F4HXQ7">
    <property type="expression patterns" value="baseline and differential"/>
</dbReference>
<dbReference type="GO" id="GO:0016020">
    <property type="term" value="C:membrane"/>
    <property type="evidence" value="ECO:0000314"/>
    <property type="project" value="UniProtKB"/>
</dbReference>
<dbReference type="GO" id="GO:0030133">
    <property type="term" value="C:transport vesicle"/>
    <property type="evidence" value="ECO:0000314"/>
    <property type="project" value="UniProtKB"/>
</dbReference>
<dbReference type="GO" id="GO:0017022">
    <property type="term" value="F:myosin binding"/>
    <property type="evidence" value="ECO:0000353"/>
    <property type="project" value="UniProtKB"/>
</dbReference>
<dbReference type="GO" id="GO:0080115">
    <property type="term" value="F:myosin XI tail binding"/>
    <property type="evidence" value="ECO:0000314"/>
    <property type="project" value="TAIR"/>
</dbReference>
<dbReference type="InterPro" id="IPR007656">
    <property type="entry name" value="GTD-bd"/>
</dbReference>
<dbReference type="InterPro" id="IPR039306">
    <property type="entry name" value="MYOB"/>
</dbReference>
<dbReference type="PANTHER" id="PTHR31448:SF32">
    <property type="entry name" value="MYOSIN-BINDING PROTEIN 1"/>
    <property type="match status" value="1"/>
</dbReference>
<dbReference type="PANTHER" id="PTHR31448">
    <property type="entry name" value="MYOSIN-BINDING PROTEIN 2"/>
    <property type="match status" value="1"/>
</dbReference>
<dbReference type="Pfam" id="PF04576">
    <property type="entry name" value="Zein-binding"/>
    <property type="match status" value="1"/>
</dbReference>
<dbReference type="PROSITE" id="PS51775">
    <property type="entry name" value="GTD_BINDING"/>
    <property type="match status" value="1"/>
</dbReference>
<evidence type="ECO:0000255" key="1"/>
<evidence type="ECO:0000255" key="2">
    <source>
        <dbReference type="PROSITE-ProRule" id="PRU01111"/>
    </source>
</evidence>
<evidence type="ECO:0000256" key="3">
    <source>
        <dbReference type="SAM" id="MobiDB-lite"/>
    </source>
</evidence>
<evidence type="ECO:0000269" key="4">
    <source>
    </source>
</evidence>
<evidence type="ECO:0000303" key="5">
    <source>
    </source>
</evidence>
<evidence type="ECO:0000305" key="6"/>
<evidence type="ECO:0000312" key="7">
    <source>
        <dbReference type="Araport" id="AT1G08800"/>
    </source>
</evidence>
<evidence type="ECO:0000312" key="8">
    <source>
        <dbReference type="EMBL" id="AAF99773.1"/>
    </source>
</evidence>
<evidence type="ECO:0000312" key="9">
    <source>
        <dbReference type="Proteomes" id="UP000006548"/>
    </source>
</evidence>
<name>MYOB1_ARATH</name>
<comment type="function">
    <text evidence="4">Membrane-anchored myosin receptors that define a distinct, plant-specific transport vesicle compartment.</text>
</comment>
<comment type="subunit">
    <text evidence="4">Interacts with myosin XI-K, XI-I and XI-1.</text>
</comment>
<comment type="subcellular location">
    <subcellularLocation>
        <location evidence="4">Endomembrane system</location>
        <topology evidence="1">Single-pass membrane protein</topology>
    </subcellularLocation>
</comment>
<comment type="tissue specificity">
    <text evidence="4">Expressed in leaf epidermal cells, roots and root hairs.</text>
</comment>
<comment type="domain">
    <text evidence="4">The GTD-binding domain is sufficient for myosin binding. The transmembrane region (1-61) is sufficient for the membrane targeting.</text>
</comment>
<comment type="disruption phenotype">
    <text evidence="4">No visible phenotype. Myob1 and myob2 double mutant has no visible phenotype, but a delayed flowering. Myob1, myob2 and myob3 triple mutant has a significant height reduction and a delayed flowering. Myob1, myob2, myob3 and myob4 quadruple mutant has a significant height reduction, a reduced rosette diameter and a delayed flowering.</text>
</comment>
<comment type="sequence caution" evidence="6">
    <conflict type="erroneous gene model prediction">
        <sequence resource="EMBL-CDS" id="AAF99773"/>
    </conflict>
</comment>
<protein>
    <recommendedName>
        <fullName evidence="5">Myosin-binding protein 1</fullName>
    </recommendedName>
</protein>
<gene>
    <name evidence="5" type="primary">MYOB1</name>
    <name evidence="7" type="ordered locus">At1g08800</name>
    <name evidence="8" type="ORF">F22O13.29</name>
</gene>
<accession>F4HXQ7</accession>
<accession>Q8GXM3</accession>
<accession>Q9FRQ9</accession>
<reference key="1">
    <citation type="journal article" date="2000" name="Nature">
        <title>Sequence and analysis of chromosome 1 of the plant Arabidopsis thaliana.</title>
        <authorList>
            <person name="Theologis A."/>
            <person name="Ecker J.R."/>
            <person name="Palm C.J."/>
            <person name="Federspiel N.A."/>
            <person name="Kaul S."/>
            <person name="White O."/>
            <person name="Alonso J."/>
            <person name="Altafi H."/>
            <person name="Araujo R."/>
            <person name="Bowman C.L."/>
            <person name="Brooks S.Y."/>
            <person name="Buehler E."/>
            <person name="Chan A."/>
            <person name="Chao Q."/>
            <person name="Chen H."/>
            <person name="Cheuk R.F."/>
            <person name="Chin C.W."/>
            <person name="Chung M.K."/>
            <person name="Conn L."/>
            <person name="Conway A.B."/>
            <person name="Conway A.R."/>
            <person name="Creasy T.H."/>
            <person name="Dewar K."/>
            <person name="Dunn P."/>
            <person name="Etgu P."/>
            <person name="Feldblyum T.V."/>
            <person name="Feng J.-D."/>
            <person name="Fong B."/>
            <person name="Fujii C.Y."/>
            <person name="Gill J.E."/>
            <person name="Goldsmith A.D."/>
            <person name="Haas B."/>
            <person name="Hansen N.F."/>
            <person name="Hughes B."/>
            <person name="Huizar L."/>
            <person name="Hunter J.L."/>
            <person name="Jenkins J."/>
            <person name="Johnson-Hopson C."/>
            <person name="Khan S."/>
            <person name="Khaykin E."/>
            <person name="Kim C.J."/>
            <person name="Koo H.L."/>
            <person name="Kremenetskaia I."/>
            <person name="Kurtz D.B."/>
            <person name="Kwan A."/>
            <person name="Lam B."/>
            <person name="Langin-Hooper S."/>
            <person name="Lee A."/>
            <person name="Lee J.M."/>
            <person name="Lenz C.A."/>
            <person name="Li J.H."/>
            <person name="Li Y.-P."/>
            <person name="Lin X."/>
            <person name="Liu S.X."/>
            <person name="Liu Z.A."/>
            <person name="Luros J.S."/>
            <person name="Maiti R."/>
            <person name="Marziali A."/>
            <person name="Militscher J."/>
            <person name="Miranda M."/>
            <person name="Nguyen M."/>
            <person name="Nierman W.C."/>
            <person name="Osborne B.I."/>
            <person name="Pai G."/>
            <person name="Peterson J."/>
            <person name="Pham P.K."/>
            <person name="Rizzo M."/>
            <person name="Rooney T."/>
            <person name="Rowley D."/>
            <person name="Sakano H."/>
            <person name="Salzberg S.L."/>
            <person name="Schwartz J.R."/>
            <person name="Shinn P."/>
            <person name="Southwick A.M."/>
            <person name="Sun H."/>
            <person name="Tallon L.J."/>
            <person name="Tambunga G."/>
            <person name="Toriumi M.J."/>
            <person name="Town C.D."/>
            <person name="Utterback T."/>
            <person name="Van Aken S."/>
            <person name="Vaysberg M."/>
            <person name="Vysotskaia V.S."/>
            <person name="Walker M."/>
            <person name="Wu D."/>
            <person name="Yu G."/>
            <person name="Fraser C.M."/>
            <person name="Venter J.C."/>
            <person name="Davis R.W."/>
        </authorList>
    </citation>
    <scope>NUCLEOTIDE SEQUENCE [LARGE SCALE GENOMIC DNA]</scope>
    <source>
        <strain>cv. Columbia</strain>
    </source>
</reference>
<reference key="2">
    <citation type="journal article" date="2017" name="Plant J.">
        <title>Araport11: a complete reannotation of the Arabidopsis thaliana reference genome.</title>
        <authorList>
            <person name="Cheng C.Y."/>
            <person name="Krishnakumar V."/>
            <person name="Chan A.P."/>
            <person name="Thibaud-Nissen F."/>
            <person name="Schobel S."/>
            <person name="Town C.D."/>
        </authorList>
    </citation>
    <scope>GENOME REANNOTATION</scope>
    <source>
        <strain>cv. Columbia</strain>
    </source>
</reference>
<reference key="3">
    <citation type="journal article" date="2002" name="Science">
        <title>Functional annotation of a full-length Arabidopsis cDNA collection.</title>
        <authorList>
            <person name="Seki M."/>
            <person name="Narusaka M."/>
            <person name="Kamiya A."/>
            <person name="Ishida J."/>
            <person name="Satou M."/>
            <person name="Sakurai T."/>
            <person name="Nakajima M."/>
            <person name="Enju A."/>
            <person name="Akiyama K."/>
            <person name="Oono Y."/>
            <person name="Muramatsu M."/>
            <person name="Hayashizaki Y."/>
            <person name="Kawai J."/>
            <person name="Carninci P."/>
            <person name="Itoh M."/>
            <person name="Ishii Y."/>
            <person name="Arakawa T."/>
            <person name="Shibata K."/>
            <person name="Shinagawa A."/>
            <person name="Shinozaki K."/>
        </authorList>
    </citation>
    <scope>NUCLEOTIDE SEQUENCE [LARGE SCALE MRNA]</scope>
    <source>
        <strain>cv. Columbia</strain>
    </source>
</reference>
<reference key="4">
    <citation type="journal article" date="2013" name="Plant Cell">
        <title>Identification of myosin XI receptors in Arabidopsis defines a distinct class of transport vesicles.</title>
        <authorList>
            <person name="Peremyslov V.V."/>
            <person name="Morgun E.A."/>
            <person name="Kurth E.G."/>
            <person name="Makarova K.S."/>
            <person name="Koonin E.V."/>
            <person name="Dolja V.V."/>
        </authorList>
    </citation>
    <scope>FUNCTION</scope>
    <scope>INTERACTION WITH XI-K; XI-I AND XI-1</scope>
    <scope>DOMAIN</scope>
    <scope>TISSUE SPECIFICITY</scope>
    <scope>SUBCELLULAR LOCATION</scope>
    <scope>DISRUPTION PHENOTYPE</scope>
</reference>
<organism evidence="9">
    <name type="scientific">Arabidopsis thaliana</name>
    <name type="common">Mouse-ear cress</name>
    <dbReference type="NCBI Taxonomy" id="3702"/>
    <lineage>
        <taxon>Eukaryota</taxon>
        <taxon>Viridiplantae</taxon>
        <taxon>Streptophyta</taxon>
        <taxon>Embryophyta</taxon>
        <taxon>Tracheophyta</taxon>
        <taxon>Spermatophyta</taxon>
        <taxon>Magnoliopsida</taxon>
        <taxon>eudicotyledons</taxon>
        <taxon>Gunneridae</taxon>
        <taxon>Pentapetalae</taxon>
        <taxon>rosids</taxon>
        <taxon>malvids</taxon>
        <taxon>Brassicales</taxon>
        <taxon>Brassicaceae</taxon>
        <taxon>Camelineae</taxon>
        <taxon>Arabidopsis</taxon>
    </lineage>
</organism>
<sequence length="1113" mass="125428">MGSRSFTRALALAFNEWLLMFMLFVNSIFSYVIARFADYSELQSPCLMCSNLDHILRRTKDLKKTHWDIICSKHKSEISSLVYCHAHGKLVDVRGMCETCLFSFATTNKSNAETYRLLVGKLGEDSHFGSKSDRSKYPNCSKLTDCTCCNQLWTPQTAATQVAEREILPKIGLLGKIRTGKQSAPKKSVSFNHLPDVGYTELKIHSDTESEAVFSDTEPKQESSLNHLPPVGYNEPKIGLVGDVRTGKPSTPKKSVSFNHLPDVGYTELKIHSDTESEAVFSEDECVVLKDEDHKYQIVDLQTHPIITLPYDLATDKLLNFDFPLEPFVTRNDREEVQLQETNWRTYSSFPVLIPVNDVPETSEKVFKEEEINSLDNLFLTSRAMKHFAAAKVKEEPIRLQDISSTPDVKENPANASLMEETELICLSDVTATSGAMEHSEVILKEREELIHLQDISVTPDFKENPANASLLEETELICLNDVTSPLRAVEHSAVLLKDKVEPIRLQDGGSLTPDFMENSANASILEETELICVNDVTSTSRTMGHSSVVLKENEEPIRFQDSSLTPDFKENPASTFLVEETELICLNDVTSPSRAMEHSTVFIEEKEELVRHQNITLTQDFMENPANSSLREETELICLNDVTSTSEVAETPEDVLEGIELMSIHDISLDEVSESVTTNQTSVEISKERDTDQADITSLESEYIVVPSPNSMPENSTDNCVSDKKEMKETSLRISSLSEMAPRDVTSHTEAALESESSSFNSMSVAAETNQYSGELLDLADAYNIVVGNEGHYDSNGRQQIENWMKKDTSRVSEDLKALLTQISASRGIEFLSPRDVSPKISVNSSDQETKNLDHDMQLLLQKRMLERNESNLSLEGVSVTEIEGESEGDRLKRQVDYDRKLLTGLYKELEEERSASAVATNQAMAMITRLQEEKASFQMEALQNLRMMEEQAEYDMEAIQRLNDLLVEREKLIQDLEAEIEYFRDQTPQKKNKLDVAEKVTEMDSPSEGMSNKIQSCLVGFDEERLYITSCLEKIENRVNGKAHDDNLPAQESVSELHERVERLKGDLYFLEQVMNSLGHGNEGVQFVKEIASHLQTLRSLSMKRQDQTEC</sequence>
<keyword id="KW-0175">Coiled coil</keyword>
<keyword id="KW-0472">Membrane</keyword>
<keyword id="KW-1185">Reference proteome</keyword>
<keyword id="KW-0812">Transmembrane</keyword>
<keyword id="KW-1133">Transmembrane helix</keyword>
<proteinExistence type="evidence at protein level"/>